<keyword id="KW-0028">Amino-acid biosynthesis</keyword>
<keyword id="KW-0100">Branched-chain amino acid biosynthesis</keyword>
<keyword id="KW-0432">Leucine biosynthesis</keyword>
<keyword id="KW-0456">Lyase</keyword>
<gene>
    <name evidence="1" type="primary">leuD</name>
    <name type="ordered locus">FTN_0060</name>
</gene>
<feature type="chain" id="PRO_1000063767" description="3-isopropylmalate dehydratase small subunit">
    <location>
        <begin position="1"/>
        <end position="189"/>
    </location>
</feature>
<comment type="function">
    <text evidence="1">Catalyzes the isomerization between 2-isopropylmalate and 3-isopropylmalate, via the formation of 2-isopropylmaleate.</text>
</comment>
<comment type="catalytic activity">
    <reaction evidence="1">
        <text>(2R,3S)-3-isopropylmalate = (2S)-2-isopropylmalate</text>
        <dbReference type="Rhea" id="RHEA:32287"/>
        <dbReference type="ChEBI" id="CHEBI:1178"/>
        <dbReference type="ChEBI" id="CHEBI:35121"/>
        <dbReference type="EC" id="4.2.1.33"/>
    </reaction>
</comment>
<comment type="pathway">
    <text evidence="1">Amino-acid biosynthesis; L-leucine biosynthesis; L-leucine from 3-methyl-2-oxobutanoate: step 2/4.</text>
</comment>
<comment type="subunit">
    <text evidence="1">Heterodimer of LeuC and LeuD.</text>
</comment>
<comment type="similarity">
    <text evidence="1">Belongs to the LeuD family. LeuD type 1 subfamily.</text>
</comment>
<proteinExistence type="inferred from homology"/>
<name>LEUD_FRATN</name>
<accession>A0Q406</accession>
<protein>
    <recommendedName>
        <fullName evidence="1">3-isopropylmalate dehydratase small subunit</fullName>
        <ecNumber evidence="1">4.2.1.33</ecNumber>
    </recommendedName>
    <alternativeName>
        <fullName evidence="1">Alpha-IPM isomerase</fullName>
        <shortName evidence="1">IPMI</shortName>
    </alternativeName>
    <alternativeName>
        <fullName evidence="1">Isopropylmalate isomerase</fullName>
    </alternativeName>
</protein>
<reference key="1">
    <citation type="journal article" date="2007" name="Genome Biol.">
        <title>Comparison of Francisella tularensis genomes reveals evolutionary events associated with the emergence of human pathogenic strains.</title>
        <authorList>
            <person name="Rohmer L."/>
            <person name="Fong C."/>
            <person name="Abmayr S."/>
            <person name="Wasnick M."/>
            <person name="Larson Freeman T.J."/>
            <person name="Radey M."/>
            <person name="Guina T."/>
            <person name="Svensson K."/>
            <person name="Hayden H.S."/>
            <person name="Jacobs M."/>
            <person name="Gallagher L.A."/>
            <person name="Manoil C."/>
            <person name="Ernst R.K."/>
            <person name="Drees B."/>
            <person name="Buckley D."/>
            <person name="Haugen E."/>
            <person name="Bovee D."/>
            <person name="Zhou Y."/>
            <person name="Chang J."/>
            <person name="Levy R."/>
            <person name="Lim R."/>
            <person name="Gillett W."/>
            <person name="Guenthener D."/>
            <person name="Kang A."/>
            <person name="Shaffer S.A."/>
            <person name="Taylor G."/>
            <person name="Chen J."/>
            <person name="Gallis B."/>
            <person name="D'Argenio D.A."/>
            <person name="Forsman M."/>
            <person name="Olson M.V."/>
            <person name="Goodlett D.R."/>
            <person name="Kaul R."/>
            <person name="Miller S.I."/>
            <person name="Brittnacher M.J."/>
        </authorList>
    </citation>
    <scope>NUCLEOTIDE SEQUENCE [LARGE SCALE GENOMIC DNA]</scope>
    <source>
        <strain>U112</strain>
    </source>
</reference>
<organism>
    <name type="scientific">Francisella tularensis subsp. novicida (strain U112)</name>
    <dbReference type="NCBI Taxonomy" id="401614"/>
    <lineage>
        <taxon>Bacteria</taxon>
        <taxon>Pseudomonadati</taxon>
        <taxon>Pseudomonadota</taxon>
        <taxon>Gammaproteobacteria</taxon>
        <taxon>Thiotrichales</taxon>
        <taxon>Francisellaceae</taxon>
        <taxon>Francisella</taxon>
    </lineage>
</organism>
<dbReference type="EC" id="4.2.1.33" evidence="1"/>
<dbReference type="EMBL" id="CP000439">
    <property type="protein sequence ID" value="ABK88971.1"/>
    <property type="molecule type" value="Genomic_DNA"/>
</dbReference>
<dbReference type="RefSeq" id="WP_003017457.1">
    <property type="nucleotide sequence ID" value="NZ_CP009633.1"/>
</dbReference>
<dbReference type="SMR" id="A0Q406"/>
<dbReference type="GeneID" id="75264441"/>
<dbReference type="KEGG" id="ftn:FTN_0060"/>
<dbReference type="KEGG" id="ftx:AW25_140"/>
<dbReference type="BioCyc" id="FTUL401614:G1G75-63-MONOMER"/>
<dbReference type="UniPathway" id="UPA00048">
    <property type="reaction ID" value="UER00071"/>
</dbReference>
<dbReference type="Proteomes" id="UP000000762">
    <property type="component" value="Chromosome"/>
</dbReference>
<dbReference type="GO" id="GO:0009316">
    <property type="term" value="C:3-isopropylmalate dehydratase complex"/>
    <property type="evidence" value="ECO:0007669"/>
    <property type="project" value="InterPro"/>
</dbReference>
<dbReference type="GO" id="GO:0003861">
    <property type="term" value="F:3-isopropylmalate dehydratase activity"/>
    <property type="evidence" value="ECO:0007669"/>
    <property type="project" value="UniProtKB-UniRule"/>
</dbReference>
<dbReference type="GO" id="GO:0009098">
    <property type="term" value="P:L-leucine biosynthetic process"/>
    <property type="evidence" value="ECO:0007669"/>
    <property type="project" value="UniProtKB-UniRule"/>
</dbReference>
<dbReference type="CDD" id="cd01577">
    <property type="entry name" value="IPMI_Swivel"/>
    <property type="match status" value="1"/>
</dbReference>
<dbReference type="FunFam" id="3.20.19.10:FF:000003">
    <property type="entry name" value="3-isopropylmalate dehydratase small subunit"/>
    <property type="match status" value="1"/>
</dbReference>
<dbReference type="Gene3D" id="3.20.19.10">
    <property type="entry name" value="Aconitase, domain 4"/>
    <property type="match status" value="1"/>
</dbReference>
<dbReference type="HAMAP" id="MF_01031">
    <property type="entry name" value="LeuD_type1"/>
    <property type="match status" value="1"/>
</dbReference>
<dbReference type="InterPro" id="IPR004431">
    <property type="entry name" value="3-IsopropMal_deHydase_ssu"/>
</dbReference>
<dbReference type="InterPro" id="IPR015928">
    <property type="entry name" value="Aconitase/3IPM_dehydase_swvl"/>
</dbReference>
<dbReference type="InterPro" id="IPR000573">
    <property type="entry name" value="AconitaseA/IPMdHydase_ssu_swvl"/>
</dbReference>
<dbReference type="InterPro" id="IPR033940">
    <property type="entry name" value="IPMI_Swivel"/>
</dbReference>
<dbReference type="InterPro" id="IPR050075">
    <property type="entry name" value="LeuD"/>
</dbReference>
<dbReference type="NCBIfam" id="TIGR00171">
    <property type="entry name" value="leuD"/>
    <property type="match status" value="1"/>
</dbReference>
<dbReference type="NCBIfam" id="NF002458">
    <property type="entry name" value="PRK01641.1"/>
    <property type="match status" value="1"/>
</dbReference>
<dbReference type="PANTHER" id="PTHR43345:SF5">
    <property type="entry name" value="3-ISOPROPYLMALATE DEHYDRATASE SMALL SUBUNIT"/>
    <property type="match status" value="1"/>
</dbReference>
<dbReference type="PANTHER" id="PTHR43345">
    <property type="entry name" value="3-ISOPROPYLMALATE DEHYDRATASE SMALL SUBUNIT 2-RELATED-RELATED"/>
    <property type="match status" value="1"/>
</dbReference>
<dbReference type="Pfam" id="PF00694">
    <property type="entry name" value="Aconitase_C"/>
    <property type="match status" value="1"/>
</dbReference>
<dbReference type="SUPFAM" id="SSF52016">
    <property type="entry name" value="LeuD/IlvD-like"/>
    <property type="match status" value="1"/>
</dbReference>
<evidence type="ECO:0000255" key="1">
    <source>
        <dbReference type="HAMAP-Rule" id="MF_01031"/>
    </source>
</evidence>
<sequence>MQAFKKLTSSAIPLWLSDIDTDMIIPANFLTQTTKDGYGKSLFHNLKEKDSSFVFNNPDYSNSEILIAGDNFGCGSSREHAVWALTQAGIKVIIAPSFSDIFFNNAAKNGLLLISLDKDTVKELCDKAEDPKFSMTIDLQEQTVSADGSIYSFDYDPFRKDCLIRGLDDMTYLIEHLDIIKQFEQSQRG</sequence>